<accession>Q7UJ58</accession>
<keyword id="KW-0028">Amino-acid biosynthesis</keyword>
<keyword id="KW-0055">Arginine biosynthesis</keyword>
<keyword id="KW-0067">ATP-binding</keyword>
<keyword id="KW-0436">Ligase</keyword>
<keyword id="KW-0460">Magnesium</keyword>
<keyword id="KW-0464">Manganese</keyword>
<keyword id="KW-0479">Metal-binding</keyword>
<keyword id="KW-0547">Nucleotide-binding</keyword>
<keyword id="KW-0665">Pyrimidine biosynthesis</keyword>
<keyword id="KW-1185">Reference proteome</keyword>
<keyword id="KW-0677">Repeat</keyword>
<organism>
    <name type="scientific">Rhodopirellula baltica (strain DSM 10527 / NCIMB 13988 / SH1)</name>
    <dbReference type="NCBI Taxonomy" id="243090"/>
    <lineage>
        <taxon>Bacteria</taxon>
        <taxon>Pseudomonadati</taxon>
        <taxon>Planctomycetota</taxon>
        <taxon>Planctomycetia</taxon>
        <taxon>Pirellulales</taxon>
        <taxon>Pirellulaceae</taxon>
        <taxon>Rhodopirellula</taxon>
    </lineage>
</organism>
<comment type="function">
    <text evidence="1">Large subunit of the glutamine-dependent carbamoyl phosphate synthetase (CPSase). CPSase catalyzes the formation of carbamoyl phosphate from the ammonia moiety of glutamine, carbonate, and phosphate donated by ATP, constituting the first step of 2 biosynthetic pathways, one leading to arginine and/or urea and the other to pyrimidine nucleotides. The large subunit (synthetase) binds the substrates ammonia (free or transferred from glutamine from the small subunit), hydrogencarbonate and ATP and carries out an ATP-coupled ligase reaction, activating hydrogencarbonate by forming carboxy phosphate which reacts with ammonia to form carbamoyl phosphate.</text>
</comment>
<comment type="catalytic activity">
    <reaction evidence="1">
        <text>hydrogencarbonate + L-glutamine + 2 ATP + H2O = carbamoyl phosphate + L-glutamate + 2 ADP + phosphate + 2 H(+)</text>
        <dbReference type="Rhea" id="RHEA:18633"/>
        <dbReference type="ChEBI" id="CHEBI:15377"/>
        <dbReference type="ChEBI" id="CHEBI:15378"/>
        <dbReference type="ChEBI" id="CHEBI:17544"/>
        <dbReference type="ChEBI" id="CHEBI:29985"/>
        <dbReference type="ChEBI" id="CHEBI:30616"/>
        <dbReference type="ChEBI" id="CHEBI:43474"/>
        <dbReference type="ChEBI" id="CHEBI:58228"/>
        <dbReference type="ChEBI" id="CHEBI:58359"/>
        <dbReference type="ChEBI" id="CHEBI:456216"/>
        <dbReference type="EC" id="6.3.5.5"/>
    </reaction>
</comment>
<comment type="catalytic activity">
    <molecule>Carbamoyl phosphate synthase large chain</molecule>
    <reaction evidence="1">
        <text>hydrogencarbonate + NH4(+) + 2 ATP = carbamoyl phosphate + 2 ADP + phosphate + 2 H(+)</text>
        <dbReference type="Rhea" id="RHEA:18029"/>
        <dbReference type="ChEBI" id="CHEBI:15378"/>
        <dbReference type="ChEBI" id="CHEBI:17544"/>
        <dbReference type="ChEBI" id="CHEBI:28938"/>
        <dbReference type="ChEBI" id="CHEBI:30616"/>
        <dbReference type="ChEBI" id="CHEBI:43474"/>
        <dbReference type="ChEBI" id="CHEBI:58228"/>
        <dbReference type="ChEBI" id="CHEBI:456216"/>
        <dbReference type="EC" id="6.3.4.16"/>
    </reaction>
</comment>
<comment type="cofactor">
    <cofactor evidence="1">
        <name>Mg(2+)</name>
        <dbReference type="ChEBI" id="CHEBI:18420"/>
    </cofactor>
    <cofactor evidence="1">
        <name>Mn(2+)</name>
        <dbReference type="ChEBI" id="CHEBI:29035"/>
    </cofactor>
    <text evidence="1">Binds 4 Mg(2+) or Mn(2+) ions per subunit.</text>
</comment>
<comment type="pathway">
    <text evidence="1">Amino-acid biosynthesis; L-arginine biosynthesis; carbamoyl phosphate from bicarbonate: step 1/1.</text>
</comment>
<comment type="pathway">
    <text evidence="1">Pyrimidine metabolism; UMP biosynthesis via de novo pathway; (S)-dihydroorotate from bicarbonate: step 1/3.</text>
</comment>
<comment type="subunit">
    <text evidence="1">Composed of two chains; the small (or glutamine) chain promotes the hydrolysis of glutamine to ammonia, which is used by the large (or ammonia) chain to synthesize carbamoyl phosphate. Tetramer of heterodimers (alpha,beta)4.</text>
</comment>
<comment type="domain">
    <text evidence="1">The large subunit is composed of 2 ATP-grasp domains that are involved in binding the 2 ATP molecules needed for carbamoyl phosphate synthesis. The N-terminal ATP-grasp domain (referred to as the carboxyphosphate synthetic component) catalyzes the ATP-dependent phosphorylation of hydrogencarbonate to carboxyphosphate and the subsequent nucleophilic attack by ammonia to form a carbamate intermediate. The C-terminal ATP-grasp domain (referred to as the carbamoyl phosphate synthetic component) then catalyzes the phosphorylation of carbamate with the second ATP to form the end product carbamoyl phosphate. The reactive and unstable enzyme intermediates are sequentially channeled from one active site to the next through the interior of the protein over a distance of at least 96 A.</text>
</comment>
<comment type="similarity">
    <text evidence="1">Belongs to the CarB family.</text>
</comment>
<feature type="chain" id="PRO_0000227022" description="Carbamoyl phosphate synthase large chain">
    <location>
        <begin position="1"/>
        <end position="1083"/>
    </location>
</feature>
<feature type="domain" description="ATP-grasp 1" evidence="1">
    <location>
        <begin position="133"/>
        <end position="328"/>
    </location>
</feature>
<feature type="domain" description="ATP-grasp 2" evidence="1">
    <location>
        <begin position="683"/>
        <end position="878"/>
    </location>
</feature>
<feature type="domain" description="MGS-like" evidence="1">
    <location>
        <begin position="945"/>
        <end position="1083"/>
    </location>
</feature>
<feature type="region of interest" description="Carboxyphosphate synthetic domain" evidence="1">
    <location>
        <begin position="1"/>
        <end position="402"/>
    </location>
</feature>
<feature type="region of interest" description="Oligomerization domain" evidence="1">
    <location>
        <begin position="403"/>
        <end position="557"/>
    </location>
</feature>
<feature type="region of interest" description="Carbamoyl phosphate synthetic domain" evidence="1">
    <location>
        <begin position="558"/>
        <end position="944"/>
    </location>
</feature>
<feature type="region of interest" description="Allosteric domain" evidence="1">
    <location>
        <begin position="945"/>
        <end position="1083"/>
    </location>
</feature>
<feature type="binding site" evidence="1">
    <location>
        <position position="129"/>
    </location>
    <ligand>
        <name>ATP</name>
        <dbReference type="ChEBI" id="CHEBI:30616"/>
        <label>1</label>
    </ligand>
</feature>
<feature type="binding site" evidence="1">
    <location>
        <position position="169"/>
    </location>
    <ligand>
        <name>ATP</name>
        <dbReference type="ChEBI" id="CHEBI:30616"/>
        <label>1</label>
    </ligand>
</feature>
<feature type="binding site" evidence="1">
    <location>
        <position position="175"/>
    </location>
    <ligand>
        <name>ATP</name>
        <dbReference type="ChEBI" id="CHEBI:30616"/>
        <label>1</label>
    </ligand>
</feature>
<feature type="binding site" evidence="1">
    <location>
        <position position="176"/>
    </location>
    <ligand>
        <name>ATP</name>
        <dbReference type="ChEBI" id="CHEBI:30616"/>
        <label>1</label>
    </ligand>
</feature>
<feature type="binding site" evidence="1">
    <location>
        <position position="208"/>
    </location>
    <ligand>
        <name>ATP</name>
        <dbReference type="ChEBI" id="CHEBI:30616"/>
        <label>1</label>
    </ligand>
</feature>
<feature type="binding site" evidence="1">
    <location>
        <position position="210"/>
    </location>
    <ligand>
        <name>ATP</name>
        <dbReference type="ChEBI" id="CHEBI:30616"/>
        <label>1</label>
    </ligand>
</feature>
<feature type="binding site" evidence="1">
    <location>
        <position position="215"/>
    </location>
    <ligand>
        <name>ATP</name>
        <dbReference type="ChEBI" id="CHEBI:30616"/>
        <label>1</label>
    </ligand>
</feature>
<feature type="binding site" evidence="1">
    <location>
        <position position="241"/>
    </location>
    <ligand>
        <name>ATP</name>
        <dbReference type="ChEBI" id="CHEBI:30616"/>
        <label>1</label>
    </ligand>
</feature>
<feature type="binding site" evidence="1">
    <location>
        <position position="242"/>
    </location>
    <ligand>
        <name>ATP</name>
        <dbReference type="ChEBI" id="CHEBI:30616"/>
        <label>1</label>
    </ligand>
</feature>
<feature type="binding site" evidence="1">
    <location>
        <position position="243"/>
    </location>
    <ligand>
        <name>ATP</name>
        <dbReference type="ChEBI" id="CHEBI:30616"/>
        <label>1</label>
    </ligand>
</feature>
<feature type="binding site" evidence="1">
    <location>
        <position position="285"/>
    </location>
    <ligand>
        <name>ATP</name>
        <dbReference type="ChEBI" id="CHEBI:30616"/>
        <label>1</label>
    </ligand>
</feature>
<feature type="binding site" evidence="1">
    <location>
        <position position="285"/>
    </location>
    <ligand>
        <name>Mg(2+)</name>
        <dbReference type="ChEBI" id="CHEBI:18420"/>
        <label>1</label>
    </ligand>
</feature>
<feature type="binding site" evidence="1">
    <location>
        <position position="285"/>
    </location>
    <ligand>
        <name>Mn(2+)</name>
        <dbReference type="ChEBI" id="CHEBI:29035"/>
        <label>1</label>
    </ligand>
</feature>
<feature type="binding site" evidence="1">
    <location>
        <position position="299"/>
    </location>
    <ligand>
        <name>ATP</name>
        <dbReference type="ChEBI" id="CHEBI:30616"/>
        <label>1</label>
    </ligand>
</feature>
<feature type="binding site" evidence="1">
    <location>
        <position position="299"/>
    </location>
    <ligand>
        <name>Mg(2+)</name>
        <dbReference type="ChEBI" id="CHEBI:18420"/>
        <label>1</label>
    </ligand>
</feature>
<feature type="binding site" evidence="1">
    <location>
        <position position="299"/>
    </location>
    <ligand>
        <name>Mg(2+)</name>
        <dbReference type="ChEBI" id="CHEBI:18420"/>
        <label>2</label>
    </ligand>
</feature>
<feature type="binding site" evidence="1">
    <location>
        <position position="299"/>
    </location>
    <ligand>
        <name>Mn(2+)</name>
        <dbReference type="ChEBI" id="CHEBI:29035"/>
        <label>1</label>
    </ligand>
</feature>
<feature type="binding site" evidence="1">
    <location>
        <position position="299"/>
    </location>
    <ligand>
        <name>Mn(2+)</name>
        <dbReference type="ChEBI" id="CHEBI:29035"/>
        <label>2</label>
    </ligand>
</feature>
<feature type="binding site" evidence="1">
    <location>
        <position position="301"/>
    </location>
    <ligand>
        <name>Mg(2+)</name>
        <dbReference type="ChEBI" id="CHEBI:18420"/>
        <label>2</label>
    </ligand>
</feature>
<feature type="binding site" evidence="1">
    <location>
        <position position="301"/>
    </location>
    <ligand>
        <name>Mn(2+)</name>
        <dbReference type="ChEBI" id="CHEBI:29035"/>
        <label>2</label>
    </ligand>
</feature>
<feature type="binding site" evidence="1">
    <location>
        <position position="719"/>
    </location>
    <ligand>
        <name>ATP</name>
        <dbReference type="ChEBI" id="CHEBI:30616"/>
        <label>2</label>
    </ligand>
</feature>
<feature type="binding site" evidence="1">
    <location>
        <position position="758"/>
    </location>
    <ligand>
        <name>ATP</name>
        <dbReference type="ChEBI" id="CHEBI:30616"/>
        <label>2</label>
    </ligand>
</feature>
<feature type="binding site" evidence="1">
    <location>
        <position position="760"/>
    </location>
    <ligand>
        <name>ATP</name>
        <dbReference type="ChEBI" id="CHEBI:30616"/>
        <label>2</label>
    </ligand>
</feature>
<feature type="binding site" evidence="1">
    <location>
        <position position="765"/>
    </location>
    <ligand>
        <name>ATP</name>
        <dbReference type="ChEBI" id="CHEBI:30616"/>
        <label>2</label>
    </ligand>
</feature>
<feature type="binding site" evidence="1">
    <location>
        <position position="790"/>
    </location>
    <ligand>
        <name>ATP</name>
        <dbReference type="ChEBI" id="CHEBI:30616"/>
        <label>2</label>
    </ligand>
</feature>
<feature type="binding site" evidence="1">
    <location>
        <position position="791"/>
    </location>
    <ligand>
        <name>ATP</name>
        <dbReference type="ChEBI" id="CHEBI:30616"/>
        <label>2</label>
    </ligand>
</feature>
<feature type="binding site" evidence="1">
    <location>
        <position position="792"/>
    </location>
    <ligand>
        <name>ATP</name>
        <dbReference type="ChEBI" id="CHEBI:30616"/>
        <label>2</label>
    </ligand>
</feature>
<feature type="binding site" evidence="1">
    <location>
        <position position="793"/>
    </location>
    <ligand>
        <name>ATP</name>
        <dbReference type="ChEBI" id="CHEBI:30616"/>
        <label>2</label>
    </ligand>
</feature>
<feature type="binding site" evidence="1">
    <location>
        <position position="833"/>
    </location>
    <ligand>
        <name>ATP</name>
        <dbReference type="ChEBI" id="CHEBI:30616"/>
        <label>2</label>
    </ligand>
</feature>
<feature type="binding site" evidence="1">
    <location>
        <position position="833"/>
    </location>
    <ligand>
        <name>Mg(2+)</name>
        <dbReference type="ChEBI" id="CHEBI:18420"/>
        <label>3</label>
    </ligand>
</feature>
<feature type="binding site" evidence="1">
    <location>
        <position position="833"/>
    </location>
    <ligand>
        <name>Mn(2+)</name>
        <dbReference type="ChEBI" id="CHEBI:29035"/>
        <label>3</label>
    </ligand>
</feature>
<feature type="binding site" evidence="1">
    <location>
        <position position="849"/>
    </location>
    <ligand>
        <name>ATP</name>
        <dbReference type="ChEBI" id="CHEBI:30616"/>
        <label>2</label>
    </ligand>
</feature>
<feature type="binding site" evidence="1">
    <location>
        <position position="849"/>
    </location>
    <ligand>
        <name>Mg(2+)</name>
        <dbReference type="ChEBI" id="CHEBI:18420"/>
        <label>3</label>
    </ligand>
</feature>
<feature type="binding site" evidence="1">
    <location>
        <position position="849"/>
    </location>
    <ligand>
        <name>Mg(2+)</name>
        <dbReference type="ChEBI" id="CHEBI:18420"/>
        <label>4</label>
    </ligand>
</feature>
<feature type="binding site" evidence="1">
    <location>
        <position position="849"/>
    </location>
    <ligand>
        <name>Mn(2+)</name>
        <dbReference type="ChEBI" id="CHEBI:29035"/>
        <label>3</label>
    </ligand>
</feature>
<feature type="binding site" evidence="1">
    <location>
        <position position="849"/>
    </location>
    <ligand>
        <name>Mn(2+)</name>
        <dbReference type="ChEBI" id="CHEBI:29035"/>
        <label>4</label>
    </ligand>
</feature>
<feature type="binding site" evidence="1">
    <location>
        <position position="851"/>
    </location>
    <ligand>
        <name>Mg(2+)</name>
        <dbReference type="ChEBI" id="CHEBI:18420"/>
        <label>4</label>
    </ligand>
</feature>
<feature type="binding site" evidence="1">
    <location>
        <position position="851"/>
    </location>
    <ligand>
        <name>Mn(2+)</name>
        <dbReference type="ChEBI" id="CHEBI:29035"/>
        <label>4</label>
    </ligand>
</feature>
<reference key="1">
    <citation type="journal article" date="2003" name="Proc. Natl. Acad. Sci. U.S.A.">
        <title>Complete genome sequence of the marine planctomycete Pirellula sp. strain 1.</title>
        <authorList>
            <person name="Gloeckner F.O."/>
            <person name="Kube M."/>
            <person name="Bauer M."/>
            <person name="Teeling H."/>
            <person name="Lombardot T."/>
            <person name="Ludwig W."/>
            <person name="Gade D."/>
            <person name="Beck A."/>
            <person name="Borzym K."/>
            <person name="Heitmann K."/>
            <person name="Rabus R."/>
            <person name="Schlesner H."/>
            <person name="Amann R."/>
            <person name="Reinhardt R."/>
        </authorList>
    </citation>
    <scope>NUCLEOTIDE SEQUENCE [LARGE SCALE GENOMIC DNA]</scope>
    <source>
        <strain>DSM 10527 / NCIMB 13988 / SH1</strain>
    </source>
</reference>
<evidence type="ECO:0000255" key="1">
    <source>
        <dbReference type="HAMAP-Rule" id="MF_01210"/>
    </source>
</evidence>
<dbReference type="EC" id="6.3.4.16" evidence="1"/>
<dbReference type="EC" id="6.3.5.5" evidence="1"/>
<dbReference type="EMBL" id="BX294154">
    <property type="protein sequence ID" value="CAD77400.1"/>
    <property type="molecule type" value="Genomic_DNA"/>
</dbReference>
<dbReference type="RefSeq" id="NP_870325.1">
    <property type="nucleotide sequence ID" value="NC_005027.1"/>
</dbReference>
<dbReference type="RefSeq" id="WP_011123580.1">
    <property type="nucleotide sequence ID" value="NC_005027.1"/>
</dbReference>
<dbReference type="SMR" id="Q7UJ58"/>
<dbReference type="FunCoup" id="Q7UJ58">
    <property type="interactions" value="545"/>
</dbReference>
<dbReference type="STRING" id="243090.RB12113"/>
<dbReference type="EnsemblBacteria" id="CAD77400">
    <property type="protein sequence ID" value="CAD77400"/>
    <property type="gene ID" value="RB12113"/>
</dbReference>
<dbReference type="KEGG" id="rba:RB12113"/>
<dbReference type="PATRIC" id="fig|243090.15.peg.5853"/>
<dbReference type="eggNOG" id="COG0458">
    <property type="taxonomic scope" value="Bacteria"/>
</dbReference>
<dbReference type="HOGENOM" id="CLU_000513_1_0_0"/>
<dbReference type="InParanoid" id="Q7UJ58"/>
<dbReference type="OrthoDB" id="9804197at2"/>
<dbReference type="UniPathway" id="UPA00068">
    <property type="reaction ID" value="UER00171"/>
</dbReference>
<dbReference type="UniPathway" id="UPA00070">
    <property type="reaction ID" value="UER00115"/>
</dbReference>
<dbReference type="Proteomes" id="UP000001025">
    <property type="component" value="Chromosome"/>
</dbReference>
<dbReference type="GO" id="GO:0005737">
    <property type="term" value="C:cytoplasm"/>
    <property type="evidence" value="ECO:0000318"/>
    <property type="project" value="GO_Central"/>
</dbReference>
<dbReference type="GO" id="GO:0005524">
    <property type="term" value="F:ATP binding"/>
    <property type="evidence" value="ECO:0007669"/>
    <property type="project" value="UniProtKB-UniRule"/>
</dbReference>
<dbReference type="GO" id="GO:0004087">
    <property type="term" value="F:carbamoyl-phosphate synthase (ammonia) activity"/>
    <property type="evidence" value="ECO:0007669"/>
    <property type="project" value="RHEA"/>
</dbReference>
<dbReference type="GO" id="GO:0004088">
    <property type="term" value="F:carbamoyl-phosphate synthase (glutamine-hydrolyzing) activity"/>
    <property type="evidence" value="ECO:0007669"/>
    <property type="project" value="UniProtKB-UniRule"/>
</dbReference>
<dbReference type="GO" id="GO:0046872">
    <property type="term" value="F:metal ion binding"/>
    <property type="evidence" value="ECO:0007669"/>
    <property type="project" value="UniProtKB-KW"/>
</dbReference>
<dbReference type="GO" id="GO:0044205">
    <property type="term" value="P:'de novo' UMP biosynthetic process"/>
    <property type="evidence" value="ECO:0007669"/>
    <property type="project" value="UniProtKB-UniRule"/>
</dbReference>
<dbReference type="GO" id="GO:0006541">
    <property type="term" value="P:glutamine metabolic process"/>
    <property type="evidence" value="ECO:0000318"/>
    <property type="project" value="GO_Central"/>
</dbReference>
<dbReference type="GO" id="GO:0006526">
    <property type="term" value="P:L-arginine biosynthetic process"/>
    <property type="evidence" value="ECO:0007669"/>
    <property type="project" value="UniProtKB-UniRule"/>
</dbReference>
<dbReference type="CDD" id="cd01424">
    <property type="entry name" value="MGS_CPS_II"/>
    <property type="match status" value="1"/>
</dbReference>
<dbReference type="FunFam" id="1.10.1030.10:FF:000002">
    <property type="entry name" value="Carbamoyl-phosphate synthase large chain"/>
    <property type="match status" value="1"/>
</dbReference>
<dbReference type="FunFam" id="3.30.470.20:FF:000007">
    <property type="entry name" value="Carbamoyl-phosphate synthase large chain"/>
    <property type="match status" value="1"/>
</dbReference>
<dbReference type="FunFam" id="3.30.470.20:FF:000013">
    <property type="entry name" value="Carbamoyl-phosphate synthase large chain"/>
    <property type="match status" value="1"/>
</dbReference>
<dbReference type="FunFam" id="3.40.50.20:FF:000001">
    <property type="entry name" value="Carbamoyl-phosphate synthase large chain"/>
    <property type="match status" value="1"/>
</dbReference>
<dbReference type="FunFam" id="3.40.50.20:FF:000003">
    <property type="entry name" value="Carbamoyl-phosphate synthase large chain"/>
    <property type="match status" value="1"/>
</dbReference>
<dbReference type="Gene3D" id="3.40.50.20">
    <property type="match status" value="2"/>
</dbReference>
<dbReference type="Gene3D" id="3.30.1490.20">
    <property type="entry name" value="ATP-grasp fold, A domain"/>
    <property type="match status" value="1"/>
</dbReference>
<dbReference type="Gene3D" id="3.30.470.20">
    <property type="entry name" value="ATP-grasp fold, B domain"/>
    <property type="match status" value="2"/>
</dbReference>
<dbReference type="Gene3D" id="1.10.1030.10">
    <property type="entry name" value="Carbamoyl-phosphate synthetase, large subunit oligomerisation domain"/>
    <property type="match status" value="1"/>
</dbReference>
<dbReference type="Gene3D" id="3.40.50.1380">
    <property type="entry name" value="Methylglyoxal synthase-like domain"/>
    <property type="match status" value="1"/>
</dbReference>
<dbReference type="HAMAP" id="MF_01210_A">
    <property type="entry name" value="CPSase_L_chain_A"/>
    <property type="match status" value="1"/>
</dbReference>
<dbReference type="HAMAP" id="MF_01210_B">
    <property type="entry name" value="CPSase_L_chain_B"/>
    <property type="match status" value="1"/>
</dbReference>
<dbReference type="InterPro" id="IPR011761">
    <property type="entry name" value="ATP-grasp"/>
</dbReference>
<dbReference type="InterPro" id="IPR013815">
    <property type="entry name" value="ATP_grasp_subdomain_1"/>
</dbReference>
<dbReference type="InterPro" id="IPR006275">
    <property type="entry name" value="CarbamoylP_synth_lsu"/>
</dbReference>
<dbReference type="InterPro" id="IPR005480">
    <property type="entry name" value="CarbamoylP_synth_lsu_oligo"/>
</dbReference>
<dbReference type="InterPro" id="IPR036897">
    <property type="entry name" value="CarbamoylP_synth_lsu_oligo_sf"/>
</dbReference>
<dbReference type="InterPro" id="IPR005479">
    <property type="entry name" value="CbamoylP_synth_lsu-like_ATP-bd"/>
</dbReference>
<dbReference type="InterPro" id="IPR005483">
    <property type="entry name" value="CbamoylP_synth_lsu_CPSase_dom"/>
</dbReference>
<dbReference type="InterPro" id="IPR011607">
    <property type="entry name" value="MGS-like_dom"/>
</dbReference>
<dbReference type="InterPro" id="IPR036914">
    <property type="entry name" value="MGS-like_dom_sf"/>
</dbReference>
<dbReference type="InterPro" id="IPR033937">
    <property type="entry name" value="MGS_CPS_CarB"/>
</dbReference>
<dbReference type="InterPro" id="IPR016185">
    <property type="entry name" value="PreATP-grasp_dom_sf"/>
</dbReference>
<dbReference type="NCBIfam" id="TIGR01369">
    <property type="entry name" value="CPSaseII_lrg"/>
    <property type="match status" value="1"/>
</dbReference>
<dbReference type="NCBIfam" id="NF003671">
    <property type="entry name" value="PRK05294.1"/>
    <property type="match status" value="1"/>
</dbReference>
<dbReference type="NCBIfam" id="NF009455">
    <property type="entry name" value="PRK12815.1"/>
    <property type="match status" value="1"/>
</dbReference>
<dbReference type="PANTHER" id="PTHR11405:SF53">
    <property type="entry name" value="CARBAMOYL-PHOSPHATE SYNTHASE [AMMONIA], MITOCHONDRIAL"/>
    <property type="match status" value="1"/>
</dbReference>
<dbReference type="PANTHER" id="PTHR11405">
    <property type="entry name" value="CARBAMOYLTRANSFERASE FAMILY MEMBER"/>
    <property type="match status" value="1"/>
</dbReference>
<dbReference type="Pfam" id="PF02786">
    <property type="entry name" value="CPSase_L_D2"/>
    <property type="match status" value="2"/>
</dbReference>
<dbReference type="Pfam" id="PF02787">
    <property type="entry name" value="CPSase_L_D3"/>
    <property type="match status" value="1"/>
</dbReference>
<dbReference type="Pfam" id="PF02142">
    <property type="entry name" value="MGS"/>
    <property type="match status" value="1"/>
</dbReference>
<dbReference type="PRINTS" id="PR00098">
    <property type="entry name" value="CPSASE"/>
</dbReference>
<dbReference type="SMART" id="SM01096">
    <property type="entry name" value="CPSase_L_D3"/>
    <property type="match status" value="1"/>
</dbReference>
<dbReference type="SMART" id="SM00851">
    <property type="entry name" value="MGS"/>
    <property type="match status" value="1"/>
</dbReference>
<dbReference type="SUPFAM" id="SSF48108">
    <property type="entry name" value="Carbamoyl phosphate synthetase, large subunit connection domain"/>
    <property type="match status" value="1"/>
</dbReference>
<dbReference type="SUPFAM" id="SSF56059">
    <property type="entry name" value="Glutathione synthetase ATP-binding domain-like"/>
    <property type="match status" value="2"/>
</dbReference>
<dbReference type="SUPFAM" id="SSF52335">
    <property type="entry name" value="Methylglyoxal synthase-like"/>
    <property type="match status" value="1"/>
</dbReference>
<dbReference type="SUPFAM" id="SSF52440">
    <property type="entry name" value="PreATP-grasp domain"/>
    <property type="match status" value="2"/>
</dbReference>
<dbReference type="PROSITE" id="PS50975">
    <property type="entry name" value="ATP_GRASP"/>
    <property type="match status" value="2"/>
</dbReference>
<dbReference type="PROSITE" id="PS00867">
    <property type="entry name" value="CPSASE_2"/>
    <property type="match status" value="2"/>
</dbReference>
<dbReference type="PROSITE" id="PS51855">
    <property type="entry name" value="MGS"/>
    <property type="match status" value="1"/>
</dbReference>
<protein>
    <recommendedName>
        <fullName evidence="1">Carbamoyl phosphate synthase large chain</fullName>
        <ecNumber evidence="1">6.3.4.16</ecNumber>
        <ecNumber evidence="1">6.3.5.5</ecNumber>
    </recommendedName>
    <alternativeName>
        <fullName evidence="1">Carbamoyl phosphate synthetase ammonia chain</fullName>
    </alternativeName>
</protein>
<sequence>MPRRDDIKKILLIGSGPIVIGQACEFDYSGTQACKALREEGYEVVLVNSNPATIMTDPATADATYIEPLTWQIVEKVIAKERPDALLPTLGGQTGLNVAMDLDANGVLEKYGVEMIAANAKVIAKAEEREQFKQAMDKIGLDVCKGFTVRTLADARKALAEVGLPAVVRPSFTMGGSGSAIAYNKDDFDSLVQNGLDQSPVTEVLIEESIIGWKEYEMEVMRDCDDNVVIICAIENFDPMGVHTGDSITVAPAQTLSDKEYQRMRDASLAVIREIGVETGGSNIQFAIEPDTGRMIVIEMNPRVSRSSALASKATGFPIAKIAAKLAVGYRLWELPNDITQKTKACFEPTIDYVVTKMPRFAFEKFPEADATLTTQMKSVGETMSIGRTFQESFQKALRGLEVGAFGFGSDPKDLWGTEDQPSRDEIRAKLSTPGSERVFYIRYAFKDGMTAAEIHSLTNIDPWFLDHLQQLIETEDNLRAIGKLDAIDVDTMRDAKRRGFSDRQIATITSKTESQVRAKRLEMGIRPVYKSVDTCAAEFEAFTPYYYSTYESETEVPAKGDKKRVVILGGGPNRIGQGIEFDYCCCHASFALQEMGIESIMVNSNPETVSTDYDTSDILFFEPLTIEDVLNICDAMQPDGVIVQFGGQTPLNLARGLEQAGVPIIGTSVDTIDTAEDRELFSSLIDELGLRQPPSGIARNMDEARVEAKRIGYPALVRPSFVLGGRAMEICYDHSQFARYVAEAFIVADGQPVLIDRFLEDATEVDVDAISDGNDCVIMGIMEHIEEAGVHSGDSACCIPPFSLTQPVLAEIRDATRKLAARLNVVGLMNIQFAVKMEGTQPTLYILEVNPRASRTVPFVAKATGVPVANLATKVMAGKTLKELNVTEEPIPRHVSIKESVLPFRKFAGVDIVLGPEMRSTGEVMGVSELFSIAFAKSQLAAGTVLPESGKIFLSLSANHKEAAESLGKSLIELGFELLATEGTAVRLEANGIAVTRVKKLSEGHPNLIDYLKNDDVQLILNTPSGKGARTDEGKIRAAGVQHGVPCITTLAAAEAAVRAMVAMRDTPMEVESLQRRYAQNV</sequence>
<name>CARB_RHOBA</name>
<gene>
    <name evidence="1" type="primary">carB</name>
    <name type="ordered locus">RB12113</name>
</gene>
<proteinExistence type="inferred from homology"/>